<sequence length="187" mass="20071">MGAANDAVDGRELMSAAVVGRTISRIAHQIIEKTALDSPDSPRVVLLGIPTRGVILASRLAANIGEYSGIEVDHGALDITLYRDDLMSKPPRPLEETEIPAGGVDDALVILVDDVLYSGRSVRSALDALRDVGRPRSVQLAVLVDRGHRELPVRADYVGKNVPTARSESVHVQFSEHDGHDGVVISR</sequence>
<reference key="1">
    <citation type="journal article" date="2007" name="Genome Res.">
        <title>Reductive evolution and niche adaptation inferred from the genome of Mycobacterium ulcerans, the causative agent of Buruli ulcer.</title>
        <authorList>
            <person name="Stinear T.P."/>
            <person name="Seemann T."/>
            <person name="Pidot S."/>
            <person name="Frigui W."/>
            <person name="Reysset G."/>
            <person name="Garnier T."/>
            <person name="Meurice G."/>
            <person name="Simon D."/>
            <person name="Bouchier C."/>
            <person name="Ma L."/>
            <person name="Tichit M."/>
            <person name="Porter J.L."/>
            <person name="Ryan J."/>
            <person name="Johnson P.D.R."/>
            <person name="Davies J.K."/>
            <person name="Jenkin G.A."/>
            <person name="Small P.L.C."/>
            <person name="Jones L.M."/>
            <person name="Tekaia F."/>
            <person name="Laval F."/>
            <person name="Daffe M."/>
            <person name="Parkhill J."/>
            <person name="Cole S.T."/>
        </authorList>
    </citation>
    <scope>NUCLEOTIDE SEQUENCE [LARGE SCALE GENOMIC DNA]</scope>
    <source>
        <strain>Agy99</strain>
    </source>
</reference>
<protein>
    <recommendedName>
        <fullName evidence="1">Bifunctional protein PyrR</fullName>
    </recommendedName>
    <domain>
        <recommendedName>
            <fullName evidence="1">Pyrimidine operon regulatory protein</fullName>
        </recommendedName>
    </domain>
    <domain>
        <recommendedName>
            <fullName evidence="1">Uracil phosphoribosyltransferase</fullName>
            <shortName evidence="1">UPRTase</shortName>
            <ecNumber evidence="1">2.4.2.9</ecNumber>
        </recommendedName>
    </domain>
</protein>
<comment type="function">
    <text evidence="1">Regulates the transcription of the pyrimidine nucleotide (pyr) operon in response to exogenous pyrimidines.</text>
</comment>
<comment type="function">
    <text evidence="1">Also displays a weak uracil phosphoribosyltransferase activity which is not physiologically significant.</text>
</comment>
<comment type="catalytic activity">
    <reaction evidence="1">
        <text>UMP + diphosphate = 5-phospho-alpha-D-ribose 1-diphosphate + uracil</text>
        <dbReference type="Rhea" id="RHEA:13017"/>
        <dbReference type="ChEBI" id="CHEBI:17568"/>
        <dbReference type="ChEBI" id="CHEBI:33019"/>
        <dbReference type="ChEBI" id="CHEBI:57865"/>
        <dbReference type="ChEBI" id="CHEBI:58017"/>
        <dbReference type="EC" id="2.4.2.9"/>
    </reaction>
</comment>
<comment type="similarity">
    <text evidence="1">Belongs to the purine/pyrimidine phosphoribosyltransferase family. PyrR subfamily.</text>
</comment>
<name>PYRR_MYCUA</name>
<keyword id="KW-0328">Glycosyltransferase</keyword>
<keyword id="KW-0804">Transcription</keyword>
<keyword id="KW-0805">Transcription regulation</keyword>
<keyword id="KW-0808">Transferase</keyword>
<feature type="chain" id="PRO_1000053851" description="Bifunctional protein PyrR">
    <location>
        <begin position="1"/>
        <end position="187"/>
    </location>
</feature>
<feature type="short sequence motif" description="PRPP-binding" evidence="1">
    <location>
        <begin position="109"/>
        <end position="121"/>
    </location>
</feature>
<gene>
    <name evidence="1" type="primary">pyrR</name>
    <name type="ordered locus">MUL_1779</name>
</gene>
<proteinExistence type="inferred from homology"/>
<evidence type="ECO:0000255" key="1">
    <source>
        <dbReference type="HAMAP-Rule" id="MF_01219"/>
    </source>
</evidence>
<dbReference type="EC" id="2.4.2.9" evidence="1"/>
<dbReference type="EMBL" id="CP000325">
    <property type="protein sequence ID" value="ABL04256.1"/>
    <property type="molecule type" value="Genomic_DNA"/>
</dbReference>
<dbReference type="RefSeq" id="WP_011739876.1">
    <property type="nucleotide sequence ID" value="NC_008611.1"/>
</dbReference>
<dbReference type="SMR" id="A0PPI7"/>
<dbReference type="KEGG" id="mul:MUL_1779"/>
<dbReference type="eggNOG" id="COG2065">
    <property type="taxonomic scope" value="Bacteria"/>
</dbReference>
<dbReference type="HOGENOM" id="CLU_094234_0_0_11"/>
<dbReference type="Proteomes" id="UP000000765">
    <property type="component" value="Chromosome"/>
</dbReference>
<dbReference type="GO" id="GO:0004845">
    <property type="term" value="F:uracil phosphoribosyltransferase activity"/>
    <property type="evidence" value="ECO:0007669"/>
    <property type="project" value="UniProtKB-UniRule"/>
</dbReference>
<dbReference type="GO" id="GO:0006355">
    <property type="term" value="P:regulation of DNA-templated transcription"/>
    <property type="evidence" value="ECO:0007669"/>
    <property type="project" value="UniProtKB-UniRule"/>
</dbReference>
<dbReference type="CDD" id="cd06223">
    <property type="entry name" value="PRTases_typeI"/>
    <property type="match status" value="1"/>
</dbReference>
<dbReference type="FunFam" id="3.40.50.2020:FF:000020">
    <property type="entry name" value="Bifunctional protein PyrR"/>
    <property type="match status" value="1"/>
</dbReference>
<dbReference type="Gene3D" id="3.40.50.2020">
    <property type="match status" value="1"/>
</dbReference>
<dbReference type="HAMAP" id="MF_01219">
    <property type="entry name" value="PyrR"/>
    <property type="match status" value="1"/>
</dbReference>
<dbReference type="InterPro" id="IPR000836">
    <property type="entry name" value="PRibTrfase_dom"/>
</dbReference>
<dbReference type="InterPro" id="IPR029057">
    <property type="entry name" value="PRTase-like"/>
</dbReference>
<dbReference type="InterPro" id="IPR023050">
    <property type="entry name" value="PyrR"/>
</dbReference>
<dbReference type="InterPro" id="IPR050137">
    <property type="entry name" value="PyrR_bifunctional"/>
</dbReference>
<dbReference type="NCBIfam" id="NF003547">
    <property type="entry name" value="PRK05205.1-3"/>
    <property type="match status" value="1"/>
</dbReference>
<dbReference type="NCBIfam" id="NF003549">
    <property type="entry name" value="PRK05205.1-5"/>
    <property type="match status" value="1"/>
</dbReference>
<dbReference type="PANTHER" id="PTHR11608">
    <property type="entry name" value="BIFUNCTIONAL PROTEIN PYRR"/>
    <property type="match status" value="1"/>
</dbReference>
<dbReference type="PANTHER" id="PTHR11608:SF0">
    <property type="entry name" value="BIFUNCTIONAL PROTEIN PYRR"/>
    <property type="match status" value="1"/>
</dbReference>
<dbReference type="Pfam" id="PF00156">
    <property type="entry name" value="Pribosyltran"/>
    <property type="match status" value="1"/>
</dbReference>
<dbReference type="SUPFAM" id="SSF53271">
    <property type="entry name" value="PRTase-like"/>
    <property type="match status" value="1"/>
</dbReference>
<accession>A0PPI7</accession>
<organism>
    <name type="scientific">Mycobacterium ulcerans (strain Agy99)</name>
    <dbReference type="NCBI Taxonomy" id="362242"/>
    <lineage>
        <taxon>Bacteria</taxon>
        <taxon>Bacillati</taxon>
        <taxon>Actinomycetota</taxon>
        <taxon>Actinomycetes</taxon>
        <taxon>Mycobacteriales</taxon>
        <taxon>Mycobacteriaceae</taxon>
        <taxon>Mycobacterium</taxon>
        <taxon>Mycobacterium ulcerans group</taxon>
    </lineage>
</organism>